<gene>
    <name evidence="1" type="primary">rpsD</name>
    <name type="ordered locus">Aasi_0171</name>
</gene>
<accession>B3EUJ7</accession>
<evidence type="ECO:0000255" key="1">
    <source>
        <dbReference type="HAMAP-Rule" id="MF_01306"/>
    </source>
</evidence>
<evidence type="ECO:0000305" key="2"/>
<name>RS4_AMOA5</name>
<comment type="function">
    <text evidence="1">One of the primary rRNA binding proteins, it binds directly to 16S rRNA where it nucleates assembly of the body of the 30S subunit.</text>
</comment>
<comment type="function">
    <text evidence="1">With S5 and S12 plays an important role in translational accuracy.</text>
</comment>
<comment type="subunit">
    <text evidence="1">Part of the 30S ribosomal subunit. Contacts protein S5. The interaction surface between S4 and S5 is involved in control of translational fidelity.</text>
</comment>
<comment type="similarity">
    <text evidence="1">Belongs to the universal ribosomal protein uS4 family.</text>
</comment>
<organism>
    <name type="scientific">Amoebophilus asiaticus (strain 5a2)</name>
    <dbReference type="NCBI Taxonomy" id="452471"/>
    <lineage>
        <taxon>Bacteria</taxon>
        <taxon>Pseudomonadati</taxon>
        <taxon>Bacteroidota</taxon>
        <taxon>Cytophagia</taxon>
        <taxon>Cytophagales</taxon>
        <taxon>Amoebophilaceae</taxon>
        <taxon>Candidatus Amoebophilus</taxon>
    </lineage>
</organism>
<sequence length="200" mass="22936">MARYIGPKAKISRRFNEPIFGPSKALQKKNYPPGQHGKIRKKKSEYAIQLMEKGKAKYIYGLLEKQFANLFYKAAKKKGVTGELLLQYLETRLDNVVYRLGITPTRRSARQLVSHKHITVNGKIVNIPSYALKVGDIIGLTEKTKSSNAITERISSHSHNKNNWLEWDSKQMIGKVMSLPHREEIPEKINEQSIVELYSK</sequence>
<keyword id="KW-1185">Reference proteome</keyword>
<keyword id="KW-0687">Ribonucleoprotein</keyword>
<keyword id="KW-0689">Ribosomal protein</keyword>
<keyword id="KW-0694">RNA-binding</keyword>
<keyword id="KW-0699">rRNA-binding</keyword>
<proteinExistence type="inferred from homology"/>
<protein>
    <recommendedName>
        <fullName evidence="1">Small ribosomal subunit protein uS4</fullName>
    </recommendedName>
    <alternativeName>
        <fullName evidence="2">30S ribosomal protein S4</fullName>
    </alternativeName>
</protein>
<feature type="chain" id="PRO_1000140680" description="Small ribosomal subunit protein uS4">
    <location>
        <begin position="1"/>
        <end position="200"/>
    </location>
</feature>
<feature type="domain" description="S4 RNA-binding" evidence="1">
    <location>
        <begin position="91"/>
        <end position="150"/>
    </location>
</feature>
<reference key="1">
    <citation type="journal article" date="2010" name="J. Bacteriol.">
        <title>The genome of the amoeba symbiont 'Candidatus Amoebophilus asiaticus' reveals common mechanisms for host cell interaction among amoeba-associated bacteria.</title>
        <authorList>
            <person name="Schmitz-Esser S."/>
            <person name="Tischler P."/>
            <person name="Arnold R."/>
            <person name="Montanaro J."/>
            <person name="Wagner M."/>
            <person name="Rattei T."/>
            <person name="Horn M."/>
        </authorList>
    </citation>
    <scope>NUCLEOTIDE SEQUENCE [LARGE SCALE GENOMIC DNA]</scope>
    <source>
        <strain>5a2</strain>
    </source>
</reference>
<dbReference type="EMBL" id="CP001102">
    <property type="protein sequence ID" value="ACE05616.1"/>
    <property type="molecule type" value="Genomic_DNA"/>
</dbReference>
<dbReference type="RefSeq" id="WP_012472382.1">
    <property type="nucleotide sequence ID" value="NC_010830.1"/>
</dbReference>
<dbReference type="SMR" id="B3EUJ7"/>
<dbReference type="STRING" id="452471.Aasi_0171"/>
<dbReference type="KEGG" id="aas:Aasi_0171"/>
<dbReference type="eggNOG" id="COG0522">
    <property type="taxonomic scope" value="Bacteria"/>
</dbReference>
<dbReference type="HOGENOM" id="CLU_092403_0_2_10"/>
<dbReference type="OrthoDB" id="9803672at2"/>
<dbReference type="Proteomes" id="UP000001227">
    <property type="component" value="Chromosome"/>
</dbReference>
<dbReference type="GO" id="GO:0015935">
    <property type="term" value="C:small ribosomal subunit"/>
    <property type="evidence" value="ECO:0007669"/>
    <property type="project" value="InterPro"/>
</dbReference>
<dbReference type="GO" id="GO:0019843">
    <property type="term" value="F:rRNA binding"/>
    <property type="evidence" value="ECO:0007669"/>
    <property type="project" value="UniProtKB-UniRule"/>
</dbReference>
<dbReference type="GO" id="GO:0003735">
    <property type="term" value="F:structural constituent of ribosome"/>
    <property type="evidence" value="ECO:0007669"/>
    <property type="project" value="InterPro"/>
</dbReference>
<dbReference type="GO" id="GO:0042274">
    <property type="term" value="P:ribosomal small subunit biogenesis"/>
    <property type="evidence" value="ECO:0007669"/>
    <property type="project" value="TreeGrafter"/>
</dbReference>
<dbReference type="GO" id="GO:0006412">
    <property type="term" value="P:translation"/>
    <property type="evidence" value="ECO:0007669"/>
    <property type="project" value="UniProtKB-UniRule"/>
</dbReference>
<dbReference type="CDD" id="cd00165">
    <property type="entry name" value="S4"/>
    <property type="match status" value="1"/>
</dbReference>
<dbReference type="FunFam" id="3.10.290.10:FF:000001">
    <property type="entry name" value="30S ribosomal protein S4"/>
    <property type="match status" value="1"/>
</dbReference>
<dbReference type="Gene3D" id="1.10.1050.10">
    <property type="entry name" value="Ribosomal Protein S4 Delta 41, Chain A, domain 1"/>
    <property type="match status" value="1"/>
</dbReference>
<dbReference type="Gene3D" id="3.10.290.10">
    <property type="entry name" value="RNA-binding S4 domain"/>
    <property type="match status" value="1"/>
</dbReference>
<dbReference type="HAMAP" id="MF_01306_B">
    <property type="entry name" value="Ribosomal_uS4_B"/>
    <property type="match status" value="1"/>
</dbReference>
<dbReference type="InterPro" id="IPR022801">
    <property type="entry name" value="Ribosomal_uS4"/>
</dbReference>
<dbReference type="InterPro" id="IPR005709">
    <property type="entry name" value="Ribosomal_uS4_bac-type"/>
</dbReference>
<dbReference type="InterPro" id="IPR018079">
    <property type="entry name" value="Ribosomal_uS4_CS"/>
</dbReference>
<dbReference type="InterPro" id="IPR001912">
    <property type="entry name" value="Ribosomal_uS4_N"/>
</dbReference>
<dbReference type="InterPro" id="IPR002942">
    <property type="entry name" value="S4_RNA-bd"/>
</dbReference>
<dbReference type="InterPro" id="IPR036986">
    <property type="entry name" value="S4_RNA-bd_sf"/>
</dbReference>
<dbReference type="NCBIfam" id="NF003717">
    <property type="entry name" value="PRK05327.1"/>
    <property type="match status" value="1"/>
</dbReference>
<dbReference type="NCBIfam" id="TIGR01017">
    <property type="entry name" value="rpsD_bact"/>
    <property type="match status" value="1"/>
</dbReference>
<dbReference type="PANTHER" id="PTHR11831">
    <property type="entry name" value="30S 40S RIBOSOMAL PROTEIN"/>
    <property type="match status" value="1"/>
</dbReference>
<dbReference type="PANTHER" id="PTHR11831:SF4">
    <property type="entry name" value="SMALL RIBOSOMAL SUBUNIT PROTEIN US4M"/>
    <property type="match status" value="1"/>
</dbReference>
<dbReference type="Pfam" id="PF00163">
    <property type="entry name" value="Ribosomal_S4"/>
    <property type="match status" value="1"/>
</dbReference>
<dbReference type="Pfam" id="PF01479">
    <property type="entry name" value="S4"/>
    <property type="match status" value="1"/>
</dbReference>
<dbReference type="SMART" id="SM01390">
    <property type="entry name" value="Ribosomal_S4"/>
    <property type="match status" value="1"/>
</dbReference>
<dbReference type="SMART" id="SM00363">
    <property type="entry name" value="S4"/>
    <property type="match status" value="1"/>
</dbReference>
<dbReference type="SUPFAM" id="SSF55174">
    <property type="entry name" value="Alpha-L RNA-binding motif"/>
    <property type="match status" value="1"/>
</dbReference>
<dbReference type="PROSITE" id="PS00632">
    <property type="entry name" value="RIBOSOMAL_S4"/>
    <property type="match status" value="1"/>
</dbReference>
<dbReference type="PROSITE" id="PS50889">
    <property type="entry name" value="S4"/>
    <property type="match status" value="1"/>
</dbReference>